<dbReference type="EC" id="1.4.1.3" evidence="3"/>
<dbReference type="EMBL" id="X14223">
    <property type="protein sequence ID" value="CAA32441.1"/>
    <property type="molecule type" value="mRNA"/>
</dbReference>
<dbReference type="EMBL" id="X14044">
    <property type="protein sequence ID" value="CAA32202.1"/>
    <property type="molecule type" value="mRNA"/>
</dbReference>
<dbReference type="EMBL" id="BC081841">
    <property type="protein sequence ID" value="AAH81841.1"/>
    <property type="molecule type" value="mRNA"/>
</dbReference>
<dbReference type="EMBL" id="X64365">
    <property type="protein sequence ID" value="CAA45717.1"/>
    <property type="molecule type" value="Genomic_DNA"/>
</dbReference>
<dbReference type="EMBL" id="U95148">
    <property type="protein sequence ID" value="AAB70012.1"/>
    <property type="molecule type" value="mRNA"/>
</dbReference>
<dbReference type="PIR" id="S03707">
    <property type="entry name" value="S03707"/>
</dbReference>
<dbReference type="RefSeq" id="NP_036702.1">
    <property type="nucleotide sequence ID" value="NM_012570.2"/>
</dbReference>
<dbReference type="SMR" id="P10860"/>
<dbReference type="BioGRID" id="246566">
    <property type="interactions" value="3"/>
</dbReference>
<dbReference type="FunCoup" id="P10860">
    <property type="interactions" value="2166"/>
</dbReference>
<dbReference type="IntAct" id="P10860">
    <property type="interactions" value="10"/>
</dbReference>
<dbReference type="MINT" id="P10860"/>
<dbReference type="STRING" id="10116.ENSRNOP00000075032"/>
<dbReference type="ChEMBL" id="CHEMBL2176833"/>
<dbReference type="CarbonylDB" id="P10860"/>
<dbReference type="GlyGen" id="P10860">
    <property type="glycosylation" value="4 sites, 1 O-linked glycan (2 sites)"/>
</dbReference>
<dbReference type="iPTMnet" id="P10860"/>
<dbReference type="PhosphoSitePlus" id="P10860"/>
<dbReference type="SwissPalm" id="P10860"/>
<dbReference type="jPOST" id="P10860"/>
<dbReference type="PaxDb" id="10116-ENSRNOP00000013789"/>
<dbReference type="Ensembl" id="ENSRNOT00000083446.2">
    <property type="protein sequence ID" value="ENSRNOP00000075032.1"/>
    <property type="gene ID" value="ENSRNOG00000057367.2"/>
</dbReference>
<dbReference type="GeneID" id="24399"/>
<dbReference type="KEGG" id="rno:24399"/>
<dbReference type="UCSC" id="RGD:2708">
    <property type="organism name" value="rat"/>
</dbReference>
<dbReference type="AGR" id="RGD:2708"/>
<dbReference type="CTD" id="2746"/>
<dbReference type="RGD" id="2708">
    <property type="gene designation" value="Glud1"/>
</dbReference>
<dbReference type="eggNOG" id="KOG2250">
    <property type="taxonomic scope" value="Eukaryota"/>
</dbReference>
<dbReference type="GeneTree" id="ENSGT00390000000854"/>
<dbReference type="HOGENOM" id="CLU_025763_1_0_1"/>
<dbReference type="InParanoid" id="P10860"/>
<dbReference type="OMA" id="MIMGWMM"/>
<dbReference type="OrthoDB" id="6718861at2759"/>
<dbReference type="PhylomeDB" id="P10860"/>
<dbReference type="TreeFam" id="TF313945"/>
<dbReference type="BRENDA" id="1.4.1.3">
    <property type="organism ID" value="5301"/>
</dbReference>
<dbReference type="Reactome" id="R-RNO-2151201">
    <property type="pathway name" value="Transcriptional activation of mitochondrial biogenesis"/>
</dbReference>
<dbReference type="Reactome" id="R-RNO-8964539">
    <property type="pathway name" value="Glutamate and glutamine metabolism"/>
</dbReference>
<dbReference type="Reactome" id="R-RNO-9837999">
    <property type="pathway name" value="Mitochondrial protein degradation"/>
</dbReference>
<dbReference type="SABIO-RK" id="P10860"/>
<dbReference type="PRO" id="PR:P10860"/>
<dbReference type="Proteomes" id="UP000002494">
    <property type="component" value="Chromosome 16"/>
</dbReference>
<dbReference type="Bgee" id="ENSRNOG00000057367">
    <property type="expression patterns" value="Expressed in liver and 20 other cell types or tissues"/>
</dbReference>
<dbReference type="GO" id="GO:0005737">
    <property type="term" value="C:cytoplasm"/>
    <property type="evidence" value="ECO:0000266"/>
    <property type="project" value="RGD"/>
</dbReference>
<dbReference type="GO" id="GO:0005783">
    <property type="term" value="C:endoplasmic reticulum"/>
    <property type="evidence" value="ECO:0000250"/>
    <property type="project" value="UniProtKB"/>
</dbReference>
<dbReference type="GO" id="GO:0005759">
    <property type="term" value="C:mitochondrial matrix"/>
    <property type="evidence" value="ECO:0000266"/>
    <property type="project" value="RGD"/>
</dbReference>
<dbReference type="GO" id="GO:0005739">
    <property type="term" value="C:mitochondrion"/>
    <property type="evidence" value="ECO:0000266"/>
    <property type="project" value="RGD"/>
</dbReference>
<dbReference type="GO" id="GO:0043531">
    <property type="term" value="F:ADP binding"/>
    <property type="evidence" value="ECO:0000266"/>
    <property type="project" value="RGD"/>
</dbReference>
<dbReference type="GO" id="GO:0005524">
    <property type="term" value="F:ATP binding"/>
    <property type="evidence" value="ECO:0007669"/>
    <property type="project" value="UniProtKB-KW"/>
</dbReference>
<dbReference type="GO" id="GO:0019899">
    <property type="term" value="F:enzyme binding"/>
    <property type="evidence" value="ECO:0000353"/>
    <property type="project" value="RGD"/>
</dbReference>
<dbReference type="GO" id="GO:0004352">
    <property type="term" value="F:glutamate dehydrogenase (NAD+) activity"/>
    <property type="evidence" value="ECO:0000314"/>
    <property type="project" value="RGD"/>
</dbReference>
<dbReference type="GO" id="GO:0004354">
    <property type="term" value="F:glutamate dehydrogenase (NADP+) activity"/>
    <property type="evidence" value="ECO:0007669"/>
    <property type="project" value="RHEA"/>
</dbReference>
<dbReference type="GO" id="GO:0004353">
    <property type="term" value="F:glutamate dehydrogenase [NAD(P)+] activity"/>
    <property type="evidence" value="ECO:0000250"/>
    <property type="project" value="UniProtKB"/>
</dbReference>
<dbReference type="GO" id="GO:0005525">
    <property type="term" value="F:GTP binding"/>
    <property type="evidence" value="ECO:0000266"/>
    <property type="project" value="RGD"/>
</dbReference>
<dbReference type="GO" id="GO:0070728">
    <property type="term" value="F:L-leucine binding"/>
    <property type="evidence" value="ECO:0000266"/>
    <property type="project" value="RGD"/>
</dbReference>
<dbReference type="GO" id="GO:0070403">
    <property type="term" value="F:NAD+ binding"/>
    <property type="evidence" value="ECO:0000266"/>
    <property type="project" value="RGD"/>
</dbReference>
<dbReference type="GO" id="GO:0042803">
    <property type="term" value="F:protein homodimerization activity"/>
    <property type="evidence" value="ECO:0000266"/>
    <property type="project" value="RGD"/>
</dbReference>
<dbReference type="GO" id="GO:0021549">
    <property type="term" value="P:cerebellum development"/>
    <property type="evidence" value="ECO:0000270"/>
    <property type="project" value="RGD"/>
</dbReference>
<dbReference type="GO" id="GO:0006537">
    <property type="term" value="P:glutamate biosynthetic process"/>
    <property type="evidence" value="ECO:0000266"/>
    <property type="project" value="RGD"/>
</dbReference>
<dbReference type="GO" id="GO:0006538">
    <property type="term" value="P:glutamate catabolic process"/>
    <property type="evidence" value="ECO:0000266"/>
    <property type="project" value="RGD"/>
</dbReference>
<dbReference type="GO" id="GO:0006541">
    <property type="term" value="P:glutamine metabolic process"/>
    <property type="evidence" value="ECO:0000250"/>
    <property type="project" value="UniProtKB"/>
</dbReference>
<dbReference type="GO" id="GO:0007616">
    <property type="term" value="P:long-term memory"/>
    <property type="evidence" value="ECO:0000270"/>
    <property type="project" value="RGD"/>
</dbReference>
<dbReference type="GO" id="GO:0032024">
    <property type="term" value="P:positive regulation of insulin secretion"/>
    <property type="evidence" value="ECO:0000266"/>
    <property type="project" value="RGD"/>
</dbReference>
<dbReference type="GO" id="GO:0010044">
    <property type="term" value="P:response to aluminum ion"/>
    <property type="evidence" value="ECO:0000314"/>
    <property type="project" value="RGD"/>
</dbReference>
<dbReference type="GO" id="GO:0072350">
    <property type="term" value="P:tricarboxylic acid metabolic process"/>
    <property type="evidence" value="ECO:0000250"/>
    <property type="project" value="UniProtKB"/>
</dbReference>
<dbReference type="CDD" id="cd01076">
    <property type="entry name" value="NAD_bind_1_Glu_DH"/>
    <property type="match status" value="1"/>
</dbReference>
<dbReference type="FunFam" id="1.10.287.140:FF:000001">
    <property type="entry name" value="Glutamate dehydrogenase 1, mitochondrial"/>
    <property type="match status" value="1"/>
</dbReference>
<dbReference type="FunFam" id="3.40.50.10860:FF:000007">
    <property type="entry name" value="Glutamate dehydrogenase 1, mitochondrial"/>
    <property type="match status" value="1"/>
</dbReference>
<dbReference type="FunFam" id="3.40.50.720:FF:000100">
    <property type="entry name" value="Glutamate dehydrogenase 1, mitochondrial"/>
    <property type="match status" value="1"/>
</dbReference>
<dbReference type="Gene3D" id="1.10.287.140">
    <property type="match status" value="1"/>
</dbReference>
<dbReference type="Gene3D" id="3.40.50.10860">
    <property type="entry name" value="Leucine Dehydrogenase, chain A, domain 1"/>
    <property type="match status" value="1"/>
</dbReference>
<dbReference type="Gene3D" id="3.40.50.720">
    <property type="entry name" value="NAD(P)-binding Rossmann-like Domain"/>
    <property type="match status" value="1"/>
</dbReference>
<dbReference type="InterPro" id="IPR046346">
    <property type="entry name" value="Aminoacid_DH-like_N_sf"/>
</dbReference>
<dbReference type="InterPro" id="IPR006095">
    <property type="entry name" value="Glu/Leu/Phe/Val/Trp_DH"/>
</dbReference>
<dbReference type="InterPro" id="IPR006096">
    <property type="entry name" value="Glu/Leu/Phe/Val/Trp_DH_C"/>
</dbReference>
<dbReference type="InterPro" id="IPR006097">
    <property type="entry name" value="Glu/Leu/Phe/Val/Trp_DH_dimer"/>
</dbReference>
<dbReference type="InterPro" id="IPR033524">
    <property type="entry name" value="Glu/Leu/Phe/Val_DH_AS"/>
</dbReference>
<dbReference type="InterPro" id="IPR036291">
    <property type="entry name" value="NAD(P)-bd_dom_sf"/>
</dbReference>
<dbReference type="InterPro" id="IPR033922">
    <property type="entry name" value="NAD_bind_Glu_DH"/>
</dbReference>
<dbReference type="PANTHER" id="PTHR11606">
    <property type="entry name" value="GLUTAMATE DEHYDROGENASE"/>
    <property type="match status" value="1"/>
</dbReference>
<dbReference type="PANTHER" id="PTHR11606:SF13">
    <property type="entry name" value="GLUTAMATE DEHYDROGENASE 1, MITOCHONDRIAL"/>
    <property type="match status" value="1"/>
</dbReference>
<dbReference type="Pfam" id="PF00208">
    <property type="entry name" value="ELFV_dehydrog"/>
    <property type="match status" value="1"/>
</dbReference>
<dbReference type="Pfam" id="PF02812">
    <property type="entry name" value="ELFV_dehydrog_N"/>
    <property type="match status" value="1"/>
</dbReference>
<dbReference type="PRINTS" id="PR00082">
    <property type="entry name" value="GLFDHDRGNASE"/>
</dbReference>
<dbReference type="SMART" id="SM00839">
    <property type="entry name" value="ELFV_dehydrog"/>
    <property type="match status" value="1"/>
</dbReference>
<dbReference type="SUPFAM" id="SSF53223">
    <property type="entry name" value="Aminoacid dehydrogenase-like, N-terminal domain"/>
    <property type="match status" value="1"/>
</dbReference>
<dbReference type="SUPFAM" id="SSF51735">
    <property type="entry name" value="NAD(P)-binding Rossmann-fold domains"/>
    <property type="match status" value="1"/>
</dbReference>
<dbReference type="PROSITE" id="PS00074">
    <property type="entry name" value="GLFV_DEHYDROGENASE"/>
    <property type="match status" value="1"/>
</dbReference>
<feature type="transit peptide" description="Mitochondrion" evidence="3">
    <location>
        <begin position="1"/>
        <end position="53"/>
    </location>
</feature>
<feature type="chain" id="PRO_0000007213" description="Glutamate dehydrogenase 1, mitochondrial">
    <location>
        <begin position="54"/>
        <end position="558"/>
    </location>
</feature>
<feature type="active site" evidence="5">
    <location>
        <position position="183"/>
    </location>
</feature>
<feature type="binding site" evidence="2">
    <location>
        <begin position="141"/>
        <end position="143"/>
    </location>
    <ligand>
        <name>NAD(+)</name>
        <dbReference type="ChEBI" id="CHEBI:57540"/>
    </ligand>
</feature>
<feature type="binding site" evidence="2">
    <location>
        <position position="147"/>
    </location>
    <ligand>
        <name>substrate</name>
    </ligand>
</feature>
<feature type="binding site" evidence="2">
    <location>
        <position position="171"/>
    </location>
    <ligand>
        <name>substrate</name>
    </ligand>
</feature>
<feature type="binding site" evidence="2">
    <location>
        <position position="176"/>
    </location>
    <ligand>
        <name>NAD(+)</name>
        <dbReference type="ChEBI" id="CHEBI:57540"/>
    </ligand>
</feature>
<feature type="binding site" evidence="2">
    <location>
        <position position="252"/>
    </location>
    <ligand>
        <name>NAD(+)</name>
        <dbReference type="ChEBI" id="CHEBI:57540"/>
    </ligand>
</feature>
<feature type="binding site" evidence="2">
    <location>
        <position position="266"/>
    </location>
    <ligand>
        <name>GTP</name>
        <dbReference type="ChEBI" id="CHEBI:37565"/>
    </ligand>
</feature>
<feature type="binding site" evidence="2">
    <location>
        <position position="270"/>
    </location>
    <ligand>
        <name>GTP</name>
        <dbReference type="ChEBI" id="CHEBI:37565"/>
    </ligand>
</feature>
<feature type="binding site" evidence="2">
    <location>
        <position position="319"/>
    </location>
    <ligand>
        <name>GTP</name>
        <dbReference type="ChEBI" id="CHEBI:37565"/>
    </ligand>
</feature>
<feature type="binding site" evidence="2">
    <location>
        <position position="322"/>
    </location>
    <ligand>
        <name>GTP</name>
        <dbReference type="ChEBI" id="CHEBI:37565"/>
    </ligand>
</feature>
<feature type="binding site" evidence="2">
    <location>
        <position position="438"/>
    </location>
    <ligand>
        <name>substrate</name>
    </ligand>
</feature>
<feature type="binding site" evidence="2">
    <location>
        <position position="444"/>
    </location>
    <ligand>
        <name>NAD(+)</name>
        <dbReference type="ChEBI" id="CHEBI:57540"/>
    </ligand>
</feature>
<feature type="binding site" evidence="2">
    <location>
        <position position="450"/>
    </location>
    <ligand>
        <name>ADP</name>
        <dbReference type="ChEBI" id="CHEBI:456216"/>
    </ligand>
</feature>
<feature type="binding site" evidence="2">
    <location>
        <position position="516"/>
    </location>
    <ligand>
        <name>ADP</name>
        <dbReference type="ChEBI" id="CHEBI:456216"/>
    </ligand>
</feature>
<feature type="modified residue" description="N6-succinyllysine" evidence="4">
    <location>
        <position position="68"/>
    </location>
</feature>
<feature type="modified residue" description="Phosphoserine" evidence="8">
    <location>
        <position position="79"/>
    </location>
</feature>
<feature type="modified residue" description="N6-acetyllysine; alternate" evidence="2">
    <location>
        <position position="84"/>
    </location>
</feature>
<feature type="modified residue" description="N6-succinyllysine; alternate" evidence="2">
    <location>
        <position position="84"/>
    </location>
</feature>
<feature type="modified residue" description="N6-acetyllysine" evidence="2">
    <location>
        <position position="90"/>
    </location>
</feature>
<feature type="modified residue" description="N6-acetyllysine; alternate" evidence="2">
    <location>
        <position position="110"/>
    </location>
</feature>
<feature type="modified residue" description="N6-succinyllysine; alternate" evidence="2">
    <location>
        <position position="110"/>
    </location>
</feature>
<feature type="modified residue" description="Phosphoserine" evidence="8">
    <location>
        <position position="128"/>
    </location>
</feature>
<feature type="modified residue" description="Phosphotyrosine" evidence="4">
    <location>
        <position position="135"/>
    </location>
</feature>
<feature type="modified residue" description="N6-(2-hydroxyisobutyryl)lysine" evidence="3">
    <location>
        <position position="147"/>
    </location>
</feature>
<feature type="modified residue" description="N6-acetyllysine; alternate" evidence="2">
    <location>
        <position position="162"/>
    </location>
</feature>
<feature type="modified residue" description="N6-succinyllysine; alternate" evidence="2">
    <location>
        <position position="162"/>
    </location>
</feature>
<feature type="modified residue" description="N6-acetyllysine" evidence="4">
    <location>
        <position position="171"/>
    </location>
</feature>
<feature type="modified residue" description="ADP-ribosylcysteine" evidence="3">
    <location>
        <position position="172"/>
    </location>
</feature>
<feature type="modified residue" description="N6-acetyllysine; alternate" evidence="2">
    <location>
        <position position="183"/>
    </location>
</feature>
<feature type="modified residue" description="N6-succinyllysine; alternate" evidence="4">
    <location>
        <position position="183"/>
    </location>
</feature>
<feature type="modified residue" description="N6-acetyllysine" evidence="4">
    <location>
        <position position="187"/>
    </location>
</feature>
<feature type="modified residue" description="N6-acetyllysine; alternate" evidence="2">
    <location>
        <position position="191"/>
    </location>
</feature>
<feature type="modified residue" description="N6-succinyllysine; alternate" evidence="4">
    <location>
        <position position="191"/>
    </location>
</feature>
<feature type="modified residue" description="N6-succinyllysine" evidence="4">
    <location>
        <position position="200"/>
    </location>
</feature>
<feature type="modified residue" description="N6-acetyllysine" evidence="4">
    <location>
        <position position="211"/>
    </location>
</feature>
<feature type="modified residue" description="Phosphoserine" evidence="3">
    <location>
        <position position="227"/>
    </location>
</feature>
<feature type="modified residue" description="N6-acetyllysine" evidence="4">
    <location>
        <position position="326"/>
    </location>
</feature>
<feature type="modified residue" description="N6-acetyllysine; alternate" evidence="4">
    <location>
        <position position="346"/>
    </location>
</feature>
<feature type="modified residue" description="N6-succinyllysine; alternate" evidence="4">
    <location>
        <position position="346"/>
    </location>
</feature>
<feature type="modified residue" description="N6-acetyllysine; alternate" evidence="4">
    <location>
        <position position="352"/>
    </location>
</feature>
<feature type="modified residue" description="N6-succinyllysine; alternate" evidence="4">
    <location>
        <position position="352"/>
    </location>
</feature>
<feature type="modified residue" description="N6-acetyllysine; alternate" evidence="2">
    <location>
        <position position="363"/>
    </location>
</feature>
<feature type="modified residue" description="N6-succinyllysine; alternate" evidence="2">
    <location>
        <position position="363"/>
    </location>
</feature>
<feature type="modified residue" description="N6-acetyllysine; alternate" evidence="2">
    <location>
        <position position="365"/>
    </location>
</feature>
<feature type="modified residue" description="N6-succinyllysine; alternate" evidence="4">
    <location>
        <position position="365"/>
    </location>
</feature>
<feature type="modified residue" description="Phosphoserine" evidence="3">
    <location>
        <position position="384"/>
    </location>
</feature>
<feature type="modified residue" description="N6-acetyllysine" evidence="2">
    <location>
        <position position="386"/>
    </location>
</feature>
<feature type="modified residue" description="N6-acetyllysine; alternate" evidence="4">
    <location>
        <position position="390"/>
    </location>
</feature>
<feature type="modified residue" description="N6-succinyllysine; alternate" evidence="4">
    <location>
        <position position="390"/>
    </location>
</feature>
<feature type="modified residue" description="N6-acetyllysine" evidence="2">
    <location>
        <position position="399"/>
    </location>
</feature>
<feature type="modified residue" description="Phosphothreonine" evidence="8">
    <location>
        <position position="410"/>
    </location>
</feature>
<feature type="modified residue" description="N6-acetyllysine; alternate" evidence="2">
    <location>
        <position position="415"/>
    </location>
</feature>
<feature type="modified residue" description="N6-succinyllysine; alternate" evidence="2">
    <location>
        <position position="415"/>
    </location>
</feature>
<feature type="modified residue" description="N6-acetyllysine; alternate" evidence="2">
    <location>
        <position position="457"/>
    </location>
</feature>
<feature type="modified residue" description="N6-malonyllysine; alternate" evidence="1">
    <location>
        <position position="457"/>
    </location>
</feature>
<feature type="modified residue" description="N6-succinyllysine; alternate" evidence="2">
    <location>
        <position position="457"/>
    </location>
</feature>
<feature type="modified residue" description="N6-acetyllysine; alternate" evidence="4">
    <location>
        <position position="477"/>
    </location>
</feature>
<feature type="modified residue" description="N6-succinyllysine; alternate" evidence="4">
    <location>
        <position position="477"/>
    </location>
</feature>
<feature type="modified residue" description="N6-acetyllysine; alternate" evidence="2">
    <location>
        <position position="480"/>
    </location>
</feature>
<feature type="modified residue" description="N6-succinyllysine; alternate" evidence="4">
    <location>
        <position position="480"/>
    </location>
</feature>
<feature type="modified residue" description="N6-acetyllysine; alternate" evidence="2">
    <location>
        <position position="503"/>
    </location>
</feature>
<feature type="modified residue" description="N6-malonyllysine; alternate" evidence="1">
    <location>
        <position position="503"/>
    </location>
</feature>
<feature type="modified residue" description="N6-succinyllysine; alternate" evidence="2">
    <location>
        <position position="503"/>
    </location>
</feature>
<feature type="modified residue" description="Phosphotyrosine" evidence="3">
    <location>
        <position position="512"/>
    </location>
</feature>
<feature type="modified residue" description="N6-acetyllysine; alternate" evidence="2">
    <location>
        <position position="527"/>
    </location>
</feature>
<feature type="modified residue" description="N6-malonyllysine; alternate" evidence="1">
    <location>
        <position position="527"/>
    </location>
</feature>
<feature type="modified residue" description="N6-succinyllysine; alternate" evidence="2">
    <location>
        <position position="527"/>
    </location>
</feature>
<feature type="modified residue" description="N6-acetyllysine; alternate" evidence="2">
    <location>
        <position position="545"/>
    </location>
</feature>
<feature type="modified residue" description="N6-succinyllysine; alternate" evidence="2">
    <location>
        <position position="545"/>
    </location>
</feature>
<feature type="modified residue" description="N6-acetyllysine" evidence="4">
    <location>
        <position position="548"/>
    </location>
</feature>
<feature type="sequence conflict" description="In Ref. 1; CAA32441." evidence="7" ref="1">
    <original>AA</original>
    <variation>GP</variation>
    <location>
        <begin position="56"/>
        <end position="57"/>
    </location>
</feature>
<sequence length="558" mass="61416">MYRRLGEVLLLSRAGPAALGSAAADSAALLGWARGQPSAVPQPGLTPVARRHYSEAATDREDDPNFFKMVEGFFDRGASIVEDKLVEDLKTRENEEQKRNRVRGILRIIKPCNHVLSLSFPIRRDDGSWEVIEGYRAQHSQHRTPCKGGIRYSTDVSVDEVKALASLMTYKCAVVDVPFGGAKAGVKINPKNYTDNELEKITRRFTMELAKKGFIGPGIDVPAPDMSTGEREMSWIADTYASTIGHYDINAHACVTGKPISQGGIHGRISATGRGVFHGIENFINEASYMSILGMTPGLGDKTFVVQGFGNVGLHSMRYLHRFGAKCVGVGESDGSIWNPDGIDPKELEDFKLQHGSILGFPKAKVYEGSILEADCDILIPAASEKQLTKSNAPRVKAKIIAEGANGPTTPEADKIFLERNIMVIPDLYLNAGGVTVSYFEWLKNLNHVSYGRLTFKYERDSNYHLLMSVQESLERKFGKHGGTIPVVPTAEFQDRISGASEKDIVHSGLAYTMERSARQIMRTAMKYNLGLDLRTAAYVNAIEKVFKVYNEAGVTFT</sequence>
<name>DHE3_RAT</name>
<evidence type="ECO:0000250" key="1"/>
<evidence type="ECO:0000250" key="2">
    <source>
        <dbReference type="UniProtKB" id="P00366"/>
    </source>
</evidence>
<evidence type="ECO:0000250" key="3">
    <source>
        <dbReference type="UniProtKB" id="P00367"/>
    </source>
</evidence>
<evidence type="ECO:0000250" key="4">
    <source>
        <dbReference type="UniProtKB" id="P26443"/>
    </source>
</evidence>
<evidence type="ECO:0000255" key="5">
    <source>
        <dbReference type="PROSITE-ProRule" id="PRU10011"/>
    </source>
</evidence>
<evidence type="ECO:0000269" key="6">
    <source>
    </source>
</evidence>
<evidence type="ECO:0000305" key="7"/>
<evidence type="ECO:0007744" key="8">
    <source>
    </source>
</evidence>
<protein>
    <recommendedName>
        <fullName>Glutamate dehydrogenase 1, mitochondrial</fullName>
        <shortName>GDH 1</shortName>
        <ecNumber evidence="3">1.4.1.3</ecNumber>
    </recommendedName>
    <alternativeName>
        <fullName>Memory-related gene 2 protein</fullName>
        <shortName>MRG-2</shortName>
    </alternativeName>
</protein>
<keyword id="KW-0007">Acetylation</keyword>
<keyword id="KW-0013">ADP-ribosylation</keyword>
<keyword id="KW-0067">ATP-binding</keyword>
<keyword id="KW-0903">Direct protein sequencing</keyword>
<keyword id="KW-0256">Endoplasmic reticulum</keyword>
<keyword id="KW-0342">GTP-binding</keyword>
<keyword id="KW-0379">Hydroxylation</keyword>
<keyword id="KW-0496">Mitochondrion</keyword>
<keyword id="KW-0521">NADP</keyword>
<keyword id="KW-0547">Nucleotide-binding</keyword>
<keyword id="KW-0560">Oxidoreductase</keyword>
<keyword id="KW-0597">Phosphoprotein</keyword>
<keyword id="KW-1185">Reference proteome</keyword>
<keyword id="KW-0809">Transit peptide</keyword>
<gene>
    <name type="primary">Glud1</name>
    <name type="synonym">Glud</name>
</gene>
<accession>P10860</accession>
<accession>Q66HI8</accession>
<accession>Q6LC16</accession>
<proteinExistence type="evidence at protein level"/>
<comment type="function">
    <text evidence="3 6">Mitochondrial glutamate dehydrogenase that converts L-glutamate into alpha-ketoglutarate. Plays a key role in glutamine anaplerosis by producing alpha-ketoglutarate, an important intermediate in the tricarboxylic acid cycle (By similarity). Plays a role in insulin homeostasis (By similarity). May be involved in learning and memory reactions by increasing the turnover of the excitatory neurotransmitter glutamate (PubMed:9275181).</text>
</comment>
<comment type="catalytic activity">
    <reaction evidence="3">
        <text>L-glutamate + NAD(+) + H2O = 2-oxoglutarate + NH4(+) + NADH + H(+)</text>
        <dbReference type="Rhea" id="RHEA:15133"/>
        <dbReference type="ChEBI" id="CHEBI:15377"/>
        <dbReference type="ChEBI" id="CHEBI:15378"/>
        <dbReference type="ChEBI" id="CHEBI:16810"/>
        <dbReference type="ChEBI" id="CHEBI:28938"/>
        <dbReference type="ChEBI" id="CHEBI:29985"/>
        <dbReference type="ChEBI" id="CHEBI:57540"/>
        <dbReference type="ChEBI" id="CHEBI:57945"/>
        <dbReference type="EC" id="1.4.1.3"/>
    </reaction>
</comment>
<comment type="catalytic activity">
    <reaction evidence="3">
        <text>L-glutamate + NADP(+) + H2O = 2-oxoglutarate + NH4(+) + NADPH + H(+)</text>
        <dbReference type="Rhea" id="RHEA:11612"/>
        <dbReference type="ChEBI" id="CHEBI:15377"/>
        <dbReference type="ChEBI" id="CHEBI:15378"/>
        <dbReference type="ChEBI" id="CHEBI:16810"/>
        <dbReference type="ChEBI" id="CHEBI:28938"/>
        <dbReference type="ChEBI" id="CHEBI:29985"/>
        <dbReference type="ChEBI" id="CHEBI:57783"/>
        <dbReference type="ChEBI" id="CHEBI:58349"/>
        <dbReference type="EC" id="1.4.1.3"/>
    </reaction>
</comment>
<comment type="activity regulation">
    <text evidence="3 4">Subject to allosteric regulation. Activated by ADP. Inhibited by GTP and ATP. ADP can occupy the NADH binding site and activate the enzyme. Inhibited by SIRT4 (By similarity). Inhibited by HADH (By similarity).</text>
</comment>
<comment type="subunit">
    <text evidence="2 4">Homohexamer (By similarity). Interacts with HADH; this interaction inhibits the activation of GLUD1 (By similarity).</text>
</comment>
<comment type="subcellular location">
    <subcellularLocation>
        <location evidence="3">Mitochondrion</location>
    </subcellularLocation>
    <subcellularLocation>
        <location evidence="3">Endoplasmic reticulum</location>
    </subcellularLocation>
    <text evidence="3">Mostly translocates into the mitochondria, only a small amount of the protein localizes to the endoplasmic reticulum.</text>
</comment>
<comment type="tissue specificity">
    <text evidence="6">Widely expressed throughout the hippocampus. After induction by training, highly expressed in the dentate gyrus, pyrimidal layer and lacunosum moleculare.</text>
</comment>
<comment type="induction">
    <text evidence="6">By water maze training in the hippocampus and in other regions of the brain including the laterodorsal nucleus of the thalamus and the cingulate cortex.</text>
</comment>
<comment type="PTM">
    <text evidence="3">ADP-ribosylated by SIRT4, leading to inactivate glutamate dehydrogenase activity. Stoichiometry shows that ADP-ribosylation occurs in one subunit per catalytically active homohexamer.</text>
</comment>
<comment type="similarity">
    <text evidence="7">Belongs to the Glu/Leu/Phe/Val dehydrogenases family.</text>
</comment>
<reference key="1">
    <citation type="journal article" date="1989" name="Nucleic Acids Res.">
        <title>Nucleotide sequence of rat liver glutamate dehydrogenase cDNA.</title>
        <authorList>
            <person name="Amuro N."/>
            <person name="Ooki K."/>
            <person name="Ito A."/>
            <person name="Goto Y."/>
            <person name="Okazaki T."/>
        </authorList>
    </citation>
    <scope>NUCLEOTIDE SEQUENCE [MRNA]</scope>
    <source>
        <strain>Sprague-Dawley</strain>
        <tissue>Liver</tissue>
    </source>
</reference>
<reference key="2">
    <citation type="journal article" date="1989" name="Nucleic Acids Res.">
        <title>Nucleotide sequence of rat liver glutamate dehydrogenase cDNA.</title>
        <authorList>
            <person name="Das A.T."/>
            <person name="Moerer P."/>
            <person name="Lamers W.H."/>
        </authorList>
    </citation>
    <scope>NUCLEOTIDE SEQUENCE [MRNA]</scope>
    <source>
        <strain>Wistar</strain>
        <tissue>Liver</tissue>
    </source>
</reference>
<reference key="3">
    <citation type="journal article" date="2004" name="Genome Res.">
        <title>The status, quality, and expansion of the NIH full-length cDNA project: the Mammalian Gene Collection (MGC).</title>
        <authorList>
            <consortium name="The MGC Project Team"/>
        </authorList>
    </citation>
    <scope>NUCLEOTIDE SEQUENCE [LARGE SCALE MRNA]</scope>
    <source>
        <tissue>Kidney</tissue>
    </source>
</reference>
<reference key="4">
    <citation type="journal article" date="1993" name="Eur. J. Biochem.">
        <title>Isolation and characterization of the rat gene encoding glutamate dehydrogenase.</title>
        <authorList>
            <person name="Das A.T."/>
            <person name="Arnberg A.C."/>
            <person name="Malingre H."/>
            <person name="Moerer P."/>
            <person name="Charles R."/>
            <person name="Moorman A.F.M."/>
            <person name="Lamers W.H."/>
        </authorList>
    </citation>
    <scope>NUCLEOTIDE SEQUENCE [GENOMIC DNA] OF 1-30</scope>
    <source>
        <strain>Wistar</strain>
        <tissue>Liver</tissue>
    </source>
</reference>
<reference key="5">
    <citation type="submission" date="2007-04" db="UniProtKB">
        <authorList>
            <person name="Lubec G."/>
            <person name="Afjehi-Sadat L."/>
            <person name="Chen W.-Q."/>
        </authorList>
    </citation>
    <scope>PROTEIN SEQUENCE OF 108-123; 303-318; 347-363; 400-420; 481-496 AND 504-516</scope>
    <scope>IDENTIFICATION BY MASS SPECTROMETRY</scope>
    <source>
        <strain>Sprague-Dawley</strain>
        <tissue>Hippocampus</tissue>
        <tissue>Spinal cord</tissue>
    </source>
</reference>
<reference key="6">
    <citation type="journal article" date="1991" name="Biochem. J.">
        <title>Identification of the CoA-modified forms of mitochondrial acetyl-CoA acetyltransferase and of glutamate dehydrogenase as nearest-neighbour proteins.</title>
        <authorList>
            <person name="Schwerdt G."/>
            <person name="Moller U."/>
            <person name="Huth W."/>
        </authorList>
    </citation>
    <scope>PROTEIN SEQUENCE OF 161-190</scope>
</reference>
<reference key="7">
    <citation type="journal article" date="1997" name="Proc. Natl. Acad. Sci. U.S.A.">
        <title>Late memory-related genes in the hippocampus revealed by RNA fingerprinting.</title>
        <authorList>
            <person name="Cavallaro S."/>
            <person name="Meiri N."/>
            <person name="Yi C.-L."/>
            <person name="Musco S."/>
            <person name="Ma W."/>
            <person name="Goldberg J."/>
            <person name="Alkon D.L."/>
        </authorList>
    </citation>
    <scope>NUCLEOTIDE SEQUENCE [MRNA] OF 431-558</scope>
    <scope>FUNCTION</scope>
    <scope>TISSUE SPECIFICITY</scope>
    <scope>INDUCTION</scope>
    <source>
        <strain>Wistar</strain>
        <tissue>Hippocampus</tissue>
    </source>
</reference>
<reference key="8">
    <citation type="journal article" date="2012" name="Nat. Commun.">
        <title>Quantitative maps of protein phosphorylation sites across 14 different rat organs and tissues.</title>
        <authorList>
            <person name="Lundby A."/>
            <person name="Secher A."/>
            <person name="Lage K."/>
            <person name="Nordsborg N.B."/>
            <person name="Dmytriyev A."/>
            <person name="Lundby C."/>
            <person name="Olsen J.V."/>
        </authorList>
    </citation>
    <scope>PHOSPHORYLATION [LARGE SCALE ANALYSIS] AT SER-79; SER-128 AND THR-410</scope>
    <scope>IDENTIFICATION BY MASS SPECTROMETRY [LARGE SCALE ANALYSIS]</scope>
</reference>
<organism>
    <name type="scientific">Rattus norvegicus</name>
    <name type="common">Rat</name>
    <dbReference type="NCBI Taxonomy" id="10116"/>
    <lineage>
        <taxon>Eukaryota</taxon>
        <taxon>Metazoa</taxon>
        <taxon>Chordata</taxon>
        <taxon>Craniata</taxon>
        <taxon>Vertebrata</taxon>
        <taxon>Euteleostomi</taxon>
        <taxon>Mammalia</taxon>
        <taxon>Eutheria</taxon>
        <taxon>Euarchontoglires</taxon>
        <taxon>Glires</taxon>
        <taxon>Rodentia</taxon>
        <taxon>Myomorpha</taxon>
        <taxon>Muroidea</taxon>
        <taxon>Muridae</taxon>
        <taxon>Murinae</taxon>
        <taxon>Rattus</taxon>
    </lineage>
</organism>